<name>IHFB_PHOPR</name>
<dbReference type="EMBL" id="CR378671">
    <property type="protein sequence ID" value="CAG20832.1"/>
    <property type="molecule type" value="Genomic_DNA"/>
</dbReference>
<dbReference type="RefSeq" id="WP_011219115.1">
    <property type="nucleotide sequence ID" value="NC_006370.1"/>
</dbReference>
<dbReference type="SMR" id="Q6LPE4"/>
<dbReference type="STRING" id="298386.PBPRA2449"/>
<dbReference type="KEGG" id="ppr:PBPRA2449"/>
<dbReference type="eggNOG" id="COG0776">
    <property type="taxonomic scope" value="Bacteria"/>
</dbReference>
<dbReference type="HOGENOM" id="CLU_105066_2_0_6"/>
<dbReference type="Proteomes" id="UP000000593">
    <property type="component" value="Chromosome 1"/>
</dbReference>
<dbReference type="GO" id="GO:0005694">
    <property type="term" value="C:chromosome"/>
    <property type="evidence" value="ECO:0007669"/>
    <property type="project" value="InterPro"/>
</dbReference>
<dbReference type="GO" id="GO:0005829">
    <property type="term" value="C:cytosol"/>
    <property type="evidence" value="ECO:0007669"/>
    <property type="project" value="TreeGrafter"/>
</dbReference>
<dbReference type="GO" id="GO:0003677">
    <property type="term" value="F:DNA binding"/>
    <property type="evidence" value="ECO:0007669"/>
    <property type="project" value="UniProtKB-UniRule"/>
</dbReference>
<dbReference type="GO" id="GO:0030527">
    <property type="term" value="F:structural constituent of chromatin"/>
    <property type="evidence" value="ECO:0007669"/>
    <property type="project" value="InterPro"/>
</dbReference>
<dbReference type="GO" id="GO:0006310">
    <property type="term" value="P:DNA recombination"/>
    <property type="evidence" value="ECO:0007669"/>
    <property type="project" value="UniProtKB-UniRule"/>
</dbReference>
<dbReference type="GO" id="GO:0006355">
    <property type="term" value="P:regulation of DNA-templated transcription"/>
    <property type="evidence" value="ECO:0007669"/>
    <property type="project" value="UniProtKB-UniRule"/>
</dbReference>
<dbReference type="GO" id="GO:0006417">
    <property type="term" value="P:regulation of translation"/>
    <property type="evidence" value="ECO:0007669"/>
    <property type="project" value="UniProtKB-UniRule"/>
</dbReference>
<dbReference type="CDD" id="cd13836">
    <property type="entry name" value="IHF_B"/>
    <property type="match status" value="1"/>
</dbReference>
<dbReference type="FunFam" id="4.10.520.10:FF:000003">
    <property type="entry name" value="Integration host factor subunit beta"/>
    <property type="match status" value="1"/>
</dbReference>
<dbReference type="Gene3D" id="4.10.520.10">
    <property type="entry name" value="IHF-like DNA-binding proteins"/>
    <property type="match status" value="1"/>
</dbReference>
<dbReference type="HAMAP" id="MF_00381">
    <property type="entry name" value="IHF_beta"/>
    <property type="match status" value="1"/>
</dbReference>
<dbReference type="InterPro" id="IPR000119">
    <property type="entry name" value="Hist_DNA-bd"/>
</dbReference>
<dbReference type="InterPro" id="IPR020816">
    <property type="entry name" value="Histone-like_DNA-bd_CS"/>
</dbReference>
<dbReference type="InterPro" id="IPR010992">
    <property type="entry name" value="IHF-like_DNA-bd_dom_sf"/>
</dbReference>
<dbReference type="InterPro" id="IPR005685">
    <property type="entry name" value="IHF_beta"/>
</dbReference>
<dbReference type="NCBIfam" id="TIGR00988">
    <property type="entry name" value="hip"/>
    <property type="match status" value="1"/>
</dbReference>
<dbReference type="NCBIfam" id="NF001222">
    <property type="entry name" value="PRK00199.1"/>
    <property type="match status" value="1"/>
</dbReference>
<dbReference type="PANTHER" id="PTHR33175">
    <property type="entry name" value="DNA-BINDING PROTEIN HU"/>
    <property type="match status" value="1"/>
</dbReference>
<dbReference type="PANTHER" id="PTHR33175:SF5">
    <property type="entry name" value="INTEGRATION HOST FACTOR SUBUNIT BETA"/>
    <property type="match status" value="1"/>
</dbReference>
<dbReference type="Pfam" id="PF00216">
    <property type="entry name" value="Bac_DNA_binding"/>
    <property type="match status" value="1"/>
</dbReference>
<dbReference type="PRINTS" id="PR01727">
    <property type="entry name" value="DNABINDINGHU"/>
</dbReference>
<dbReference type="SMART" id="SM00411">
    <property type="entry name" value="BHL"/>
    <property type="match status" value="1"/>
</dbReference>
<dbReference type="SUPFAM" id="SSF47729">
    <property type="entry name" value="IHF-like DNA-binding proteins"/>
    <property type="match status" value="1"/>
</dbReference>
<dbReference type="PROSITE" id="PS00045">
    <property type="entry name" value="HISTONE_LIKE"/>
    <property type="match status" value="1"/>
</dbReference>
<reference key="1">
    <citation type="journal article" date="2005" name="Science">
        <title>Life at depth: Photobacterium profundum genome sequence and expression analysis.</title>
        <authorList>
            <person name="Vezzi A."/>
            <person name="Campanaro S."/>
            <person name="D'Angelo M."/>
            <person name="Simonato F."/>
            <person name="Vitulo N."/>
            <person name="Lauro F.M."/>
            <person name="Cestaro A."/>
            <person name="Malacrida G."/>
            <person name="Simionati B."/>
            <person name="Cannata N."/>
            <person name="Romualdi C."/>
            <person name="Bartlett D.H."/>
            <person name="Valle G."/>
        </authorList>
    </citation>
    <scope>NUCLEOTIDE SEQUENCE [LARGE SCALE GENOMIC DNA]</scope>
    <source>
        <strain>ATCC BAA-1253 / SS9</strain>
    </source>
</reference>
<proteinExistence type="inferred from homology"/>
<evidence type="ECO:0000255" key="1">
    <source>
        <dbReference type="HAMAP-Rule" id="MF_00381"/>
    </source>
</evidence>
<comment type="function">
    <text evidence="1">This protein is one of the two subunits of integration host factor, a specific DNA-binding protein that functions in genetic recombination as well as in transcriptional and translational control.</text>
</comment>
<comment type="subunit">
    <text evidence="1">Heterodimer of an alpha and a beta chain.</text>
</comment>
<comment type="similarity">
    <text evidence="1">Belongs to the bacterial histone-like protein family.</text>
</comment>
<organism>
    <name type="scientific">Photobacterium profundum (strain SS9)</name>
    <dbReference type="NCBI Taxonomy" id="298386"/>
    <lineage>
        <taxon>Bacteria</taxon>
        <taxon>Pseudomonadati</taxon>
        <taxon>Pseudomonadota</taxon>
        <taxon>Gammaproteobacteria</taxon>
        <taxon>Vibrionales</taxon>
        <taxon>Vibrionaceae</taxon>
        <taxon>Photobacterium</taxon>
    </lineage>
</organism>
<feature type="chain" id="PRO_1000060627" description="Integration host factor subunit beta">
    <location>
        <begin position="1"/>
        <end position="96"/>
    </location>
</feature>
<protein>
    <recommendedName>
        <fullName evidence="1">Integration host factor subunit beta</fullName>
        <shortName evidence="1">IHF-beta</shortName>
    </recommendedName>
</protein>
<sequence>MTKSELIERLCSQQTHLSAKQVEDAIKEILEHMAGTLAEGDRIEIRGFGSFSLHYRAPRVGRNPKTGDKVELDGKYVPHFKPGKELRDRVNAAIAA</sequence>
<gene>
    <name evidence="1" type="primary">ihfB</name>
    <name evidence="1" type="synonym">himD</name>
    <name type="ordered locus">PBPRA2449</name>
</gene>
<accession>Q6LPE4</accession>
<keyword id="KW-0233">DNA recombination</keyword>
<keyword id="KW-0238">DNA-binding</keyword>
<keyword id="KW-1185">Reference proteome</keyword>
<keyword id="KW-0804">Transcription</keyword>
<keyword id="KW-0805">Transcription regulation</keyword>
<keyword id="KW-0810">Translation regulation</keyword>